<proteinExistence type="inferred from homology"/>
<feature type="chain" id="PRO_0000091547" description="Large ribosomal subunit assembly factor BipA">
    <location>
        <begin position="1"/>
        <end position="607"/>
    </location>
</feature>
<feature type="domain" description="tr-type G" evidence="1">
    <location>
        <begin position="3"/>
        <end position="198"/>
    </location>
</feature>
<feature type="binding site" evidence="1">
    <location>
        <begin position="15"/>
        <end position="20"/>
    </location>
    <ligand>
        <name>GTP</name>
        <dbReference type="ChEBI" id="CHEBI:37565"/>
    </ligand>
</feature>
<feature type="binding site" evidence="1">
    <location>
        <begin position="128"/>
        <end position="131"/>
    </location>
    <ligand>
        <name>GTP</name>
        <dbReference type="ChEBI" id="CHEBI:37565"/>
    </ligand>
</feature>
<dbReference type="EC" id="3.6.5.-" evidence="1"/>
<dbReference type="EMBL" id="BA000003">
    <property type="protein sequence ID" value="BAB13131.1"/>
    <property type="molecule type" value="Genomic_DNA"/>
</dbReference>
<dbReference type="RefSeq" id="NP_240245.1">
    <property type="nucleotide sequence ID" value="NC_002528.1"/>
</dbReference>
<dbReference type="RefSeq" id="WP_010896114.1">
    <property type="nucleotide sequence ID" value="NC_002528.1"/>
</dbReference>
<dbReference type="SMR" id="P57508"/>
<dbReference type="STRING" id="563178.BUAP5A_426"/>
<dbReference type="EnsemblBacteria" id="BAB13131">
    <property type="protein sequence ID" value="BAB13131"/>
    <property type="gene ID" value="BAB13131"/>
</dbReference>
<dbReference type="KEGG" id="buc:BU433"/>
<dbReference type="PATRIC" id="fig|107806.10.peg.442"/>
<dbReference type="eggNOG" id="COG1217">
    <property type="taxonomic scope" value="Bacteria"/>
</dbReference>
<dbReference type="HOGENOM" id="CLU_017016_4_0_6"/>
<dbReference type="Proteomes" id="UP000001806">
    <property type="component" value="Chromosome"/>
</dbReference>
<dbReference type="GO" id="GO:0005829">
    <property type="term" value="C:cytosol"/>
    <property type="evidence" value="ECO:0007669"/>
    <property type="project" value="TreeGrafter"/>
</dbReference>
<dbReference type="GO" id="GO:1990904">
    <property type="term" value="C:ribonucleoprotein complex"/>
    <property type="evidence" value="ECO:0007669"/>
    <property type="project" value="TreeGrafter"/>
</dbReference>
<dbReference type="GO" id="GO:0005525">
    <property type="term" value="F:GTP binding"/>
    <property type="evidence" value="ECO:0007669"/>
    <property type="project" value="UniProtKB-UniRule"/>
</dbReference>
<dbReference type="GO" id="GO:0003924">
    <property type="term" value="F:GTPase activity"/>
    <property type="evidence" value="ECO:0007669"/>
    <property type="project" value="UniProtKB-UniRule"/>
</dbReference>
<dbReference type="GO" id="GO:0097216">
    <property type="term" value="F:guanosine tetraphosphate binding"/>
    <property type="evidence" value="ECO:0007669"/>
    <property type="project" value="UniProtKB-ARBA"/>
</dbReference>
<dbReference type="GO" id="GO:0043022">
    <property type="term" value="F:ribosome binding"/>
    <property type="evidence" value="ECO:0007669"/>
    <property type="project" value="UniProtKB-UniRule"/>
</dbReference>
<dbReference type="GO" id="GO:0019843">
    <property type="term" value="F:rRNA binding"/>
    <property type="evidence" value="ECO:0007669"/>
    <property type="project" value="UniProtKB-KW"/>
</dbReference>
<dbReference type="GO" id="GO:0000049">
    <property type="term" value="F:tRNA binding"/>
    <property type="evidence" value="ECO:0007669"/>
    <property type="project" value="UniProtKB-KW"/>
</dbReference>
<dbReference type="GO" id="GO:0000027">
    <property type="term" value="P:ribosomal large subunit assembly"/>
    <property type="evidence" value="ECO:0007669"/>
    <property type="project" value="UniProtKB-UniRule"/>
</dbReference>
<dbReference type="CDD" id="cd16263">
    <property type="entry name" value="BipA_III"/>
    <property type="match status" value="1"/>
</dbReference>
<dbReference type="CDD" id="cd03710">
    <property type="entry name" value="BipA_TypA_C"/>
    <property type="match status" value="1"/>
</dbReference>
<dbReference type="CDD" id="cd03691">
    <property type="entry name" value="BipA_TypA_II"/>
    <property type="match status" value="1"/>
</dbReference>
<dbReference type="CDD" id="cd01891">
    <property type="entry name" value="TypA_BipA"/>
    <property type="match status" value="1"/>
</dbReference>
<dbReference type="FunFam" id="2.40.30.10:FF:000016">
    <property type="entry name" value="GTP-binding protein TypA"/>
    <property type="match status" value="1"/>
</dbReference>
<dbReference type="FunFam" id="2.40.50.250:FF:000001">
    <property type="entry name" value="GTP-binding protein TypA"/>
    <property type="match status" value="1"/>
</dbReference>
<dbReference type="FunFam" id="3.30.70.240:FF:000002">
    <property type="entry name" value="GTP-binding protein TypA"/>
    <property type="match status" value="1"/>
</dbReference>
<dbReference type="FunFam" id="3.30.70.870:FF:000003">
    <property type="entry name" value="GTP-binding protein TypA"/>
    <property type="match status" value="1"/>
</dbReference>
<dbReference type="FunFam" id="3.40.50.300:FF:000055">
    <property type="entry name" value="GTP-binding protein TypA"/>
    <property type="match status" value="1"/>
</dbReference>
<dbReference type="Gene3D" id="3.30.70.240">
    <property type="match status" value="1"/>
</dbReference>
<dbReference type="Gene3D" id="2.40.50.250">
    <property type="entry name" value="bipa protein"/>
    <property type="match status" value="1"/>
</dbReference>
<dbReference type="Gene3D" id="3.30.70.870">
    <property type="entry name" value="Elongation Factor G (Translational Gtpase), domain 3"/>
    <property type="match status" value="1"/>
</dbReference>
<dbReference type="Gene3D" id="3.40.50.300">
    <property type="entry name" value="P-loop containing nucleotide triphosphate hydrolases"/>
    <property type="match status" value="1"/>
</dbReference>
<dbReference type="Gene3D" id="2.40.30.10">
    <property type="entry name" value="Translation factors"/>
    <property type="match status" value="1"/>
</dbReference>
<dbReference type="HAMAP" id="MF_00849">
    <property type="entry name" value="BipA"/>
    <property type="match status" value="1"/>
</dbReference>
<dbReference type="InterPro" id="IPR006298">
    <property type="entry name" value="BipA"/>
</dbReference>
<dbReference type="InterPro" id="IPR048876">
    <property type="entry name" value="BipA_C"/>
</dbReference>
<dbReference type="InterPro" id="IPR047041">
    <property type="entry name" value="BipA_GTP-bd_dom"/>
</dbReference>
<dbReference type="InterPro" id="IPR047042">
    <property type="entry name" value="BipA_II"/>
</dbReference>
<dbReference type="InterPro" id="IPR047043">
    <property type="entry name" value="BipA_III"/>
</dbReference>
<dbReference type="InterPro" id="IPR035651">
    <property type="entry name" value="BipA_V"/>
</dbReference>
<dbReference type="InterPro" id="IPR035647">
    <property type="entry name" value="EFG_III/V"/>
</dbReference>
<dbReference type="InterPro" id="IPR000640">
    <property type="entry name" value="EFG_V-like"/>
</dbReference>
<dbReference type="InterPro" id="IPR004161">
    <property type="entry name" value="EFTu-like_2"/>
</dbReference>
<dbReference type="InterPro" id="IPR031157">
    <property type="entry name" value="G_TR_CS"/>
</dbReference>
<dbReference type="InterPro" id="IPR027417">
    <property type="entry name" value="P-loop_NTPase"/>
</dbReference>
<dbReference type="InterPro" id="IPR005225">
    <property type="entry name" value="Small_GTP-bd"/>
</dbReference>
<dbReference type="InterPro" id="IPR000795">
    <property type="entry name" value="T_Tr_GTP-bd_dom"/>
</dbReference>
<dbReference type="InterPro" id="IPR009000">
    <property type="entry name" value="Transl_B-barrel_sf"/>
</dbReference>
<dbReference type="InterPro" id="IPR042116">
    <property type="entry name" value="TypA/BipA_C"/>
</dbReference>
<dbReference type="NCBIfam" id="TIGR00231">
    <property type="entry name" value="small_GTP"/>
    <property type="match status" value="1"/>
</dbReference>
<dbReference type="NCBIfam" id="TIGR01394">
    <property type="entry name" value="TypA_BipA"/>
    <property type="match status" value="1"/>
</dbReference>
<dbReference type="PANTHER" id="PTHR42908:SF8">
    <property type="entry name" value="TR-TYPE G DOMAIN-CONTAINING PROTEIN"/>
    <property type="match status" value="1"/>
</dbReference>
<dbReference type="PANTHER" id="PTHR42908">
    <property type="entry name" value="TRANSLATION ELONGATION FACTOR-RELATED"/>
    <property type="match status" value="1"/>
</dbReference>
<dbReference type="Pfam" id="PF21018">
    <property type="entry name" value="BipA_C"/>
    <property type="match status" value="1"/>
</dbReference>
<dbReference type="Pfam" id="PF00679">
    <property type="entry name" value="EFG_C"/>
    <property type="match status" value="1"/>
</dbReference>
<dbReference type="Pfam" id="PF00009">
    <property type="entry name" value="GTP_EFTU"/>
    <property type="match status" value="1"/>
</dbReference>
<dbReference type="Pfam" id="PF03144">
    <property type="entry name" value="GTP_EFTU_D2"/>
    <property type="match status" value="1"/>
</dbReference>
<dbReference type="PRINTS" id="PR00315">
    <property type="entry name" value="ELONGATNFCT"/>
</dbReference>
<dbReference type="SUPFAM" id="SSF54980">
    <property type="entry name" value="EF-G C-terminal domain-like"/>
    <property type="match status" value="2"/>
</dbReference>
<dbReference type="SUPFAM" id="SSF52540">
    <property type="entry name" value="P-loop containing nucleoside triphosphate hydrolases"/>
    <property type="match status" value="1"/>
</dbReference>
<dbReference type="SUPFAM" id="SSF50447">
    <property type="entry name" value="Translation proteins"/>
    <property type="match status" value="1"/>
</dbReference>
<dbReference type="PROSITE" id="PS00301">
    <property type="entry name" value="G_TR_1"/>
    <property type="match status" value="1"/>
</dbReference>
<dbReference type="PROSITE" id="PS51722">
    <property type="entry name" value="G_TR_2"/>
    <property type="match status" value="1"/>
</dbReference>
<name>BIPA_BUCAI</name>
<keyword id="KW-0963">Cytoplasm</keyword>
<keyword id="KW-0342">GTP-binding</keyword>
<keyword id="KW-0378">Hydrolase</keyword>
<keyword id="KW-0547">Nucleotide-binding</keyword>
<keyword id="KW-1185">Reference proteome</keyword>
<keyword id="KW-0690">Ribosome biogenesis</keyword>
<keyword id="KW-0694">RNA-binding</keyword>
<keyword id="KW-0699">rRNA-binding</keyword>
<keyword id="KW-0820">tRNA-binding</keyword>
<gene>
    <name evidence="1" type="primary">bipA</name>
    <name type="ordered locus">BU433</name>
</gene>
<sequence length="607" mass="68506">MHHSIRNIAIIAHVDHGKTTLLDKLLQQSGTFEEHEEKTERIMDSNDLEKERGITILSKNTSIKWNNYKINIVDTPGHADFGGEVERVMSMVDSVLLVVDALDGPMPQTRFVTKKAFKYGLNPIVVINKIDRIHSRPDWVVDQVFDLFVNLNASDEQLDFPIIYTSAVLGTSGTDYLNMQNNMIPLYESIIKYAPAPNVNSDQKFQMQISQLDYNSYLGVIGVGRVKQGSIKTNDKVTIIDRFGKHRSGKVNKVLNYFGLKRMEINQGYAGDIIAITGLNKLKISDTICHPDNLQPLPALSIDEPTVNMFFSVNTSPFSGKEGKYITSRQILERLKKETMHNVALQIKETKDPNIFSVSGRGELHLSILIENMRREGFELEVSRPKIIFREINGIQKEPFENVTLDIEEKNQGSVMQFIGIRKGELKNMIPDSKGRVRLEYILSSRALIGFRSEFMSITSGTGLCYSSFSHYDNLQNSNIGQRKNGVLISNSTGMAVGFSLFNLQERGKLFIGHGAQVYEGQIIGLHNRSNDLTVNCLTGKKLTNMRASGTDEAIVLTTAIHFTLEEAIGFINDDELVEVTPHSIRIRKFYLKENERKRANRNKKSI</sequence>
<protein>
    <recommendedName>
        <fullName evidence="1">Large ribosomal subunit assembly factor BipA</fullName>
        <ecNumber evidence="1">3.6.5.-</ecNumber>
    </recommendedName>
    <alternativeName>
        <fullName evidence="2">50S ribosomal subunit assembly factor BipA</fullName>
    </alternativeName>
    <alternativeName>
        <fullName evidence="1">GTP-binding protein BipA</fullName>
    </alternativeName>
</protein>
<evidence type="ECO:0000255" key="1">
    <source>
        <dbReference type="HAMAP-Rule" id="MF_00849"/>
    </source>
</evidence>
<evidence type="ECO:0000305" key="2"/>
<comment type="function">
    <text evidence="1">A 50S ribosomal subunit assembly protein with GTPase activity, required for 50S subunit assembly at low temperatures, may also play a role in translation. Binds GTP and analogs. Binds the 70S ribosome between the 30S and 50S subunits, in a similar position as ribosome-bound EF-G; it contacts a number of ribosomal proteins, both rRNAs and the A-site tRNA.</text>
</comment>
<comment type="catalytic activity">
    <reaction evidence="1">
        <text>GTP + H2O = GDP + phosphate + H(+)</text>
        <dbReference type="Rhea" id="RHEA:19669"/>
        <dbReference type="ChEBI" id="CHEBI:15377"/>
        <dbReference type="ChEBI" id="CHEBI:15378"/>
        <dbReference type="ChEBI" id="CHEBI:37565"/>
        <dbReference type="ChEBI" id="CHEBI:43474"/>
        <dbReference type="ChEBI" id="CHEBI:58189"/>
    </reaction>
</comment>
<comment type="subunit">
    <text evidence="1">Monomer.</text>
</comment>
<comment type="subcellular location">
    <subcellularLocation>
        <location evidence="1">Cytoplasm</location>
    </subcellularLocation>
    <text evidence="1">Binds to ribosomes.</text>
</comment>
<comment type="similarity">
    <text evidence="1">Belongs to the TRAFAC class translation factor GTPase superfamily. Classic translation factor GTPase family. BipA subfamily.</text>
</comment>
<reference key="1">
    <citation type="journal article" date="2000" name="Nature">
        <title>Genome sequence of the endocellular bacterial symbiont of aphids Buchnera sp. APS.</title>
        <authorList>
            <person name="Shigenobu S."/>
            <person name="Watanabe H."/>
            <person name="Hattori M."/>
            <person name="Sakaki Y."/>
            <person name="Ishikawa H."/>
        </authorList>
    </citation>
    <scope>NUCLEOTIDE SEQUENCE [LARGE SCALE GENOMIC DNA]</scope>
    <source>
        <strain>APS</strain>
    </source>
</reference>
<organism>
    <name type="scientific">Buchnera aphidicola subsp. Acyrthosiphon pisum (strain APS)</name>
    <name type="common">Acyrthosiphon pisum symbiotic bacterium</name>
    <dbReference type="NCBI Taxonomy" id="107806"/>
    <lineage>
        <taxon>Bacteria</taxon>
        <taxon>Pseudomonadati</taxon>
        <taxon>Pseudomonadota</taxon>
        <taxon>Gammaproteobacteria</taxon>
        <taxon>Enterobacterales</taxon>
        <taxon>Erwiniaceae</taxon>
        <taxon>Buchnera</taxon>
    </lineage>
</organism>
<accession>P57508</accession>